<reference key="1">
    <citation type="submission" date="2008-03" db="EMBL/GenBank/DDBJ databases">
        <title>Complete sequence of Leptothrix cholodnii SP-6.</title>
        <authorList>
            <consortium name="US DOE Joint Genome Institute"/>
            <person name="Copeland A."/>
            <person name="Lucas S."/>
            <person name="Lapidus A."/>
            <person name="Glavina del Rio T."/>
            <person name="Dalin E."/>
            <person name="Tice H."/>
            <person name="Bruce D."/>
            <person name="Goodwin L."/>
            <person name="Pitluck S."/>
            <person name="Chertkov O."/>
            <person name="Brettin T."/>
            <person name="Detter J.C."/>
            <person name="Han C."/>
            <person name="Kuske C.R."/>
            <person name="Schmutz J."/>
            <person name="Larimer F."/>
            <person name="Land M."/>
            <person name="Hauser L."/>
            <person name="Kyrpides N."/>
            <person name="Lykidis A."/>
            <person name="Emerson D."/>
            <person name="Richardson P."/>
        </authorList>
    </citation>
    <scope>NUCLEOTIDE SEQUENCE [LARGE SCALE GENOMIC DNA]</scope>
    <source>
        <strain>ATCC 51168 / LMG 8142 / SP-6</strain>
    </source>
</reference>
<organism>
    <name type="scientific">Leptothrix cholodnii (strain ATCC 51168 / LMG 8142 / SP-6)</name>
    <name type="common">Leptothrix discophora (strain SP-6)</name>
    <dbReference type="NCBI Taxonomy" id="395495"/>
    <lineage>
        <taxon>Bacteria</taxon>
        <taxon>Pseudomonadati</taxon>
        <taxon>Pseudomonadota</taxon>
        <taxon>Betaproteobacteria</taxon>
        <taxon>Burkholderiales</taxon>
        <taxon>Sphaerotilaceae</taxon>
        <taxon>Leptothrix</taxon>
    </lineage>
</organism>
<comment type="function">
    <text evidence="1">Could be a mediator in iron transactions between iron acquisition and iron-requiring processes, such as synthesis and/or repair of Fe-S clusters in biosynthetic enzymes.</text>
</comment>
<comment type="similarity">
    <text evidence="1">Belongs to the Fe(2+)-trafficking protein family.</text>
</comment>
<sequence>MARTVQCVLLKKEADGLDFSPYPGELGKRIYEQVSKEAWQQWLKHQTMLVNENRLNLADARARQYLARQMERYFFGEGADQPTGYVPPTA</sequence>
<evidence type="ECO:0000255" key="1">
    <source>
        <dbReference type="HAMAP-Rule" id="MF_00686"/>
    </source>
</evidence>
<dbReference type="EMBL" id="CP001013">
    <property type="protein sequence ID" value="ACB34495.1"/>
    <property type="molecule type" value="Genomic_DNA"/>
</dbReference>
<dbReference type="RefSeq" id="WP_012347255.1">
    <property type="nucleotide sequence ID" value="NC_010524.1"/>
</dbReference>
<dbReference type="SMR" id="B1Y3G7"/>
<dbReference type="STRING" id="395495.Lcho_2229"/>
<dbReference type="KEGG" id="lch:Lcho_2229"/>
<dbReference type="eggNOG" id="COG2924">
    <property type="taxonomic scope" value="Bacteria"/>
</dbReference>
<dbReference type="HOGENOM" id="CLU_170994_0_0_4"/>
<dbReference type="OrthoDB" id="9804318at2"/>
<dbReference type="Proteomes" id="UP000001693">
    <property type="component" value="Chromosome"/>
</dbReference>
<dbReference type="GO" id="GO:0005829">
    <property type="term" value="C:cytosol"/>
    <property type="evidence" value="ECO:0007669"/>
    <property type="project" value="TreeGrafter"/>
</dbReference>
<dbReference type="GO" id="GO:0005506">
    <property type="term" value="F:iron ion binding"/>
    <property type="evidence" value="ECO:0007669"/>
    <property type="project" value="UniProtKB-UniRule"/>
</dbReference>
<dbReference type="GO" id="GO:0034599">
    <property type="term" value="P:cellular response to oxidative stress"/>
    <property type="evidence" value="ECO:0007669"/>
    <property type="project" value="TreeGrafter"/>
</dbReference>
<dbReference type="FunFam" id="1.10.3880.10:FF:000001">
    <property type="entry name" value="Probable Fe(2+)-trafficking protein"/>
    <property type="match status" value="1"/>
</dbReference>
<dbReference type="Gene3D" id="1.10.3880.10">
    <property type="entry name" value="Fe(II) trafficking protein YggX"/>
    <property type="match status" value="1"/>
</dbReference>
<dbReference type="HAMAP" id="MF_00686">
    <property type="entry name" value="Fe_traffic_YggX"/>
    <property type="match status" value="1"/>
</dbReference>
<dbReference type="InterPro" id="IPR007457">
    <property type="entry name" value="Fe_traffick_prot_YggX"/>
</dbReference>
<dbReference type="InterPro" id="IPR036766">
    <property type="entry name" value="Fe_traffick_prot_YggX_sf"/>
</dbReference>
<dbReference type="NCBIfam" id="NF003817">
    <property type="entry name" value="PRK05408.1"/>
    <property type="match status" value="1"/>
</dbReference>
<dbReference type="PANTHER" id="PTHR36965">
    <property type="entry name" value="FE(2+)-TRAFFICKING PROTEIN-RELATED"/>
    <property type="match status" value="1"/>
</dbReference>
<dbReference type="PANTHER" id="PTHR36965:SF1">
    <property type="entry name" value="FE(2+)-TRAFFICKING PROTEIN-RELATED"/>
    <property type="match status" value="1"/>
</dbReference>
<dbReference type="Pfam" id="PF04362">
    <property type="entry name" value="Iron_traffic"/>
    <property type="match status" value="1"/>
</dbReference>
<dbReference type="PIRSF" id="PIRSF029827">
    <property type="entry name" value="Fe_traffic_YggX"/>
    <property type="match status" value="1"/>
</dbReference>
<dbReference type="SUPFAM" id="SSF111148">
    <property type="entry name" value="YggX-like"/>
    <property type="match status" value="1"/>
</dbReference>
<gene>
    <name type="ordered locus">Lcho_2229</name>
</gene>
<protein>
    <recommendedName>
        <fullName evidence="1">Probable Fe(2+)-trafficking protein</fullName>
    </recommendedName>
</protein>
<proteinExistence type="inferred from homology"/>
<feature type="chain" id="PRO_1000131851" description="Probable Fe(2+)-trafficking protein">
    <location>
        <begin position="1"/>
        <end position="90"/>
    </location>
</feature>
<name>FETP_LEPCP</name>
<accession>B1Y3G7</accession>
<keyword id="KW-0408">Iron</keyword>
<keyword id="KW-1185">Reference proteome</keyword>